<gene>
    <name evidence="1" type="primary">rplI</name>
    <name type="ordered locus">Tbd_2102</name>
</gene>
<comment type="function">
    <text evidence="1">Binds to the 23S rRNA.</text>
</comment>
<comment type="similarity">
    <text evidence="1">Belongs to the bacterial ribosomal protein bL9 family.</text>
</comment>
<name>RL9_THIDA</name>
<organism>
    <name type="scientific">Thiobacillus denitrificans (strain ATCC 25259 / T1)</name>
    <dbReference type="NCBI Taxonomy" id="292415"/>
    <lineage>
        <taxon>Bacteria</taxon>
        <taxon>Pseudomonadati</taxon>
        <taxon>Pseudomonadota</taxon>
        <taxon>Betaproteobacteria</taxon>
        <taxon>Nitrosomonadales</taxon>
        <taxon>Thiobacillaceae</taxon>
        <taxon>Thiobacillus</taxon>
    </lineage>
</organism>
<proteinExistence type="inferred from homology"/>
<keyword id="KW-1185">Reference proteome</keyword>
<keyword id="KW-0687">Ribonucleoprotein</keyword>
<keyword id="KW-0689">Ribosomal protein</keyword>
<keyword id="KW-0694">RNA-binding</keyword>
<keyword id="KW-0699">rRNA-binding</keyword>
<protein>
    <recommendedName>
        <fullName evidence="1">Large ribosomal subunit protein bL9</fullName>
    </recommendedName>
    <alternativeName>
        <fullName evidence="2">50S ribosomal protein L9</fullName>
    </alternativeName>
</protein>
<reference key="1">
    <citation type="journal article" date="2006" name="J. Bacteriol.">
        <title>The genome sequence of the obligately chemolithoautotrophic, facultatively anaerobic bacterium Thiobacillus denitrificans.</title>
        <authorList>
            <person name="Beller H.R."/>
            <person name="Chain P.S."/>
            <person name="Letain T.E."/>
            <person name="Chakicherla A."/>
            <person name="Larimer F.W."/>
            <person name="Richardson P.M."/>
            <person name="Coleman M.A."/>
            <person name="Wood A.P."/>
            <person name="Kelly D.P."/>
        </authorList>
    </citation>
    <scope>NUCLEOTIDE SEQUENCE [LARGE SCALE GENOMIC DNA]</scope>
    <source>
        <strain>ATCC 25259 / T1</strain>
    </source>
</reference>
<feature type="chain" id="PRO_0000236611" description="Large ribosomal subunit protein bL9">
    <location>
        <begin position="1"/>
        <end position="149"/>
    </location>
</feature>
<sequence length="149" mass="15835">MQVILMDKVVNLGNLGDVVKVKDGYARNFLIPTGRARRATQANMEAFAAQKAELERIAADKLADAQRRSEKLEGASVTISQKAGVDGRLFGSITNADIAEALQAQGHDVAKADVRLPDGPLKALGEYPVVLSLHSDVSANITVVVVGEQ</sequence>
<accession>Q3SH34</accession>
<evidence type="ECO:0000255" key="1">
    <source>
        <dbReference type="HAMAP-Rule" id="MF_00503"/>
    </source>
</evidence>
<evidence type="ECO:0000305" key="2"/>
<dbReference type="EMBL" id="CP000116">
    <property type="protein sequence ID" value="AAZ98055.1"/>
    <property type="molecule type" value="Genomic_DNA"/>
</dbReference>
<dbReference type="RefSeq" id="WP_011312614.1">
    <property type="nucleotide sequence ID" value="NC_007404.1"/>
</dbReference>
<dbReference type="SMR" id="Q3SH34"/>
<dbReference type="STRING" id="292415.Tbd_2102"/>
<dbReference type="KEGG" id="tbd:Tbd_2102"/>
<dbReference type="eggNOG" id="COG0359">
    <property type="taxonomic scope" value="Bacteria"/>
</dbReference>
<dbReference type="HOGENOM" id="CLU_078938_4_1_4"/>
<dbReference type="OrthoDB" id="9788336at2"/>
<dbReference type="Proteomes" id="UP000008291">
    <property type="component" value="Chromosome"/>
</dbReference>
<dbReference type="GO" id="GO:1990904">
    <property type="term" value="C:ribonucleoprotein complex"/>
    <property type="evidence" value="ECO:0007669"/>
    <property type="project" value="UniProtKB-KW"/>
</dbReference>
<dbReference type="GO" id="GO:0005840">
    <property type="term" value="C:ribosome"/>
    <property type="evidence" value="ECO:0007669"/>
    <property type="project" value="UniProtKB-KW"/>
</dbReference>
<dbReference type="GO" id="GO:0019843">
    <property type="term" value="F:rRNA binding"/>
    <property type="evidence" value="ECO:0007669"/>
    <property type="project" value="UniProtKB-UniRule"/>
</dbReference>
<dbReference type="GO" id="GO:0003735">
    <property type="term" value="F:structural constituent of ribosome"/>
    <property type="evidence" value="ECO:0007669"/>
    <property type="project" value="InterPro"/>
</dbReference>
<dbReference type="GO" id="GO:0006412">
    <property type="term" value="P:translation"/>
    <property type="evidence" value="ECO:0007669"/>
    <property type="project" value="UniProtKB-UniRule"/>
</dbReference>
<dbReference type="Gene3D" id="3.10.430.100">
    <property type="entry name" value="Ribosomal protein L9, C-terminal domain"/>
    <property type="match status" value="1"/>
</dbReference>
<dbReference type="Gene3D" id="3.40.5.10">
    <property type="entry name" value="Ribosomal protein L9, N-terminal domain"/>
    <property type="match status" value="1"/>
</dbReference>
<dbReference type="HAMAP" id="MF_00503">
    <property type="entry name" value="Ribosomal_bL9"/>
    <property type="match status" value="1"/>
</dbReference>
<dbReference type="InterPro" id="IPR000244">
    <property type="entry name" value="Ribosomal_bL9"/>
</dbReference>
<dbReference type="InterPro" id="IPR009027">
    <property type="entry name" value="Ribosomal_bL9/RNase_H1_N"/>
</dbReference>
<dbReference type="InterPro" id="IPR020594">
    <property type="entry name" value="Ribosomal_bL9_bac/chp"/>
</dbReference>
<dbReference type="InterPro" id="IPR020069">
    <property type="entry name" value="Ribosomal_bL9_C"/>
</dbReference>
<dbReference type="InterPro" id="IPR036791">
    <property type="entry name" value="Ribosomal_bL9_C_sf"/>
</dbReference>
<dbReference type="InterPro" id="IPR020070">
    <property type="entry name" value="Ribosomal_bL9_N"/>
</dbReference>
<dbReference type="InterPro" id="IPR036935">
    <property type="entry name" value="Ribosomal_bL9_N_sf"/>
</dbReference>
<dbReference type="NCBIfam" id="TIGR00158">
    <property type="entry name" value="L9"/>
    <property type="match status" value="1"/>
</dbReference>
<dbReference type="PANTHER" id="PTHR21368">
    <property type="entry name" value="50S RIBOSOMAL PROTEIN L9"/>
    <property type="match status" value="1"/>
</dbReference>
<dbReference type="Pfam" id="PF03948">
    <property type="entry name" value="Ribosomal_L9_C"/>
    <property type="match status" value="1"/>
</dbReference>
<dbReference type="Pfam" id="PF01281">
    <property type="entry name" value="Ribosomal_L9_N"/>
    <property type="match status" value="1"/>
</dbReference>
<dbReference type="SUPFAM" id="SSF55658">
    <property type="entry name" value="L9 N-domain-like"/>
    <property type="match status" value="1"/>
</dbReference>
<dbReference type="SUPFAM" id="SSF55653">
    <property type="entry name" value="Ribosomal protein L9 C-domain"/>
    <property type="match status" value="1"/>
</dbReference>
<dbReference type="PROSITE" id="PS00651">
    <property type="entry name" value="RIBOSOMAL_L9"/>
    <property type="match status" value="1"/>
</dbReference>